<protein>
    <recommendedName>
        <fullName>tRNA (guanine-N(1)-)-methyltransferase</fullName>
        <ecNumber evidence="2">2.1.1.228</ecNumber>
    </recommendedName>
    <alternativeName>
        <fullName>M1G-methyltransferase</fullName>
    </alternativeName>
    <alternativeName>
        <fullName>tRNA [GM37] methyltransferase</fullName>
    </alternativeName>
</protein>
<accession>P0A873</accession>
<accession>P07020</accession>
<comment type="function">
    <text evidence="2">Specifically methylates guanosine-37 in various tRNAs.</text>
</comment>
<comment type="catalytic activity">
    <reaction evidence="2">
        <text>guanosine(37) in tRNA + S-adenosyl-L-methionine = N(1)-methylguanosine(37) in tRNA + S-adenosyl-L-homocysteine + H(+)</text>
        <dbReference type="Rhea" id="RHEA:36899"/>
        <dbReference type="Rhea" id="RHEA-COMP:10145"/>
        <dbReference type="Rhea" id="RHEA-COMP:10147"/>
        <dbReference type="ChEBI" id="CHEBI:15378"/>
        <dbReference type="ChEBI" id="CHEBI:57856"/>
        <dbReference type="ChEBI" id="CHEBI:59789"/>
        <dbReference type="ChEBI" id="CHEBI:73542"/>
        <dbReference type="ChEBI" id="CHEBI:74269"/>
        <dbReference type="EC" id="2.1.1.228"/>
    </reaction>
</comment>
<comment type="subunit">
    <text evidence="2">Homodimer.</text>
</comment>
<comment type="interaction">
    <interactant intactId="EBI-1129132">
        <id>P0A873</id>
    </interactant>
    <interactant intactId="EBI-1129132">
        <id>P0A873</id>
        <label>trmD</label>
    </interactant>
    <organismsDiffer>false</organismsDiffer>
    <experiments>3</experiments>
</comment>
<comment type="subcellular location">
    <subcellularLocation>
        <location evidence="3">Cytoplasm</location>
    </subcellularLocation>
</comment>
<comment type="induction">
    <text>Part of the rpsP-rimM-trmD-rplS operon.</text>
</comment>
<comment type="miscellaneous">
    <text>The specific activity of this enzyme increases only slightly with increased growth rate.</text>
</comment>
<comment type="miscellaneous">
    <text>This enzyme is present at ca. 80 molecules/genome.</text>
</comment>
<comment type="similarity">
    <text evidence="3">Belongs to the RNA methyltransferase TrmD family.</text>
</comment>
<feature type="chain" id="PRO_0000060375" description="tRNA (guanine-N(1)-)-methyltransferase">
    <location>
        <begin position="1"/>
        <end position="255"/>
    </location>
</feature>
<feature type="active site" description="Proton acceptor" evidence="4">
    <location>
        <position position="169"/>
    </location>
</feature>
<feature type="binding site">
    <location>
        <position position="86"/>
    </location>
    <ligand>
        <name>S-adenosyl-L-methionine</name>
        <dbReference type="ChEBI" id="CHEBI:59789"/>
    </ligand>
</feature>
<feature type="binding site" evidence="1">
    <location>
        <position position="113"/>
    </location>
    <ligand>
        <name>S-adenosyl-L-methionine</name>
        <dbReference type="ChEBI" id="CHEBI:59789"/>
    </ligand>
</feature>
<feature type="binding site" evidence="2">
    <location>
        <begin position="133"/>
        <end position="138"/>
    </location>
    <ligand>
        <name>S-adenosyl-L-methionine</name>
        <dbReference type="ChEBI" id="CHEBI:59789"/>
    </ligand>
</feature>
<feature type="mutagenesis site" description="Loss of activity." evidence="2">
    <original>G</original>
    <variation>A</variation>
    <location>
        <position position="59"/>
    </location>
</feature>
<feature type="mutagenesis site" description="Loss of activity; no effect on tRNA binding." evidence="2">
    <original>G</original>
    <variation>A</variation>
    <location>
        <position position="91"/>
    </location>
</feature>
<feature type="mutagenesis site" description="Loss of activity." evidence="2">
    <original>R</original>
    <variation>A</variation>
    <location>
        <position position="114"/>
    </location>
</feature>
<feature type="mutagenesis site" description="Increases Km for S-adenosyl-L-methionine 24-fold." evidence="2">
    <original>Y</original>
    <variation>A</variation>
    <location>
        <position position="115"/>
    </location>
</feature>
<feature type="mutagenesis site" description="Loss of activity." evidence="2">
    <original>G</original>
    <variation>A</variation>
    <location>
        <position position="117"/>
    </location>
</feature>
<feature type="mutagenesis site" description="Loss of activity." evidence="2">
    <original>D</original>
    <variation>A</variation>
    <location>
        <position position="119"/>
    </location>
</feature>
<feature type="mutagenesis site" description="Loss of activity; no effect on tRNA binding." evidence="2">
    <original>R</original>
    <variation>A</variation>
    <location>
        <position position="121"/>
    </location>
</feature>
<feature type="mutagenesis site" description="Loss of activity." evidence="2">
    <original>D</original>
    <variation>A</variation>
    <location>
        <position position="128"/>
    </location>
</feature>
<feature type="mutagenesis site" description="Loss of activity; no effect on tRNA binding." evidence="2">
    <original>D</original>
    <variation>A</variation>
    <location>
        <position position="135"/>
    </location>
</feature>
<feature type="mutagenesis site" description="Increases Km for S-adenosyl-L-methionine 68-fold." evidence="2">
    <original>Y</original>
    <variation>A</variation>
    <location>
        <position position="136"/>
    </location>
</feature>
<feature type="mutagenesis site" description="Increases Km for S-adenosyl-L-methionine 82-fold." evidence="2">
    <original>G</original>
    <variation>A</variation>
    <location>
        <position position="141"/>
    </location>
</feature>
<feature type="mutagenesis site" description="Loss of activity; no effect on tRNA binding." evidence="2">
    <original>R</original>
    <variation>A</variation>
    <location>
        <position position="154"/>
    </location>
</feature>
<feature type="mutagenesis site" description="Loss of activity." evidence="2">
    <original>D</original>
    <variation>A</variation>
    <location>
        <position position="169"/>
    </location>
</feature>
<feature type="mutagenesis site" description="Loss of activity." evidence="2">
    <original>F</original>
    <variation>A</variation>
    <location>
        <position position="171"/>
    </location>
</feature>
<feature type="mutagenesis site" description="Loss of activity; no effect on tRNA binding." evidence="2">
    <original>P</original>
    <variation>A</variation>
    <location>
        <position position="184"/>
    </location>
</feature>
<feature type="mutagenesis site" description="Loss of activity; no effect on tRNA binding." evidence="2">
    <original>V</original>
    <variation>A</variation>
    <location>
        <position position="192"/>
    </location>
</feature>
<feature type="mutagenesis site" description="Loss of activity; no effect on tRNA binding." evidence="2">
    <original>P</original>
    <variation>A</variation>
    <location>
        <position position="193"/>
    </location>
</feature>
<feature type="mutagenesis site" description="Loss of activity; no effect on tRNA binding." evidence="2">
    <original>L</original>
    <variation>A</variation>
    <location>
        <position position="196"/>
    </location>
</feature>
<feature type="mutagenesis site" description="Loss of activity; no effect on tRNA binding." evidence="2">
    <original>L</original>
    <variation>A</variation>
    <location>
        <position position="197"/>
    </location>
</feature>
<feature type="mutagenesis site" description="Loss of activity; no effect on tRNA binding." evidence="2">
    <original>I</original>
    <variation>A</variation>
    <location>
        <position position="204"/>
    </location>
</feature>
<feature type="mutagenesis site" description="Loss of activity; no effect on tRNA binding." evidence="2">
    <original>W</original>
    <variation>A</variation>
    <location>
        <position position="207"/>
    </location>
</feature>
<feature type="mutagenesis site" description="Small decrease in activity." evidence="2">
    <original>W</original>
    <variation>F</variation>
    <variation>H</variation>
    <location>
        <position position="207"/>
    </location>
</feature>
<feature type="mutagenesis site" description="Loss of activity; no effect on tRNA binding." evidence="2">
    <original>R</original>
    <variation>A</variation>
    <location>
        <position position="208"/>
    </location>
</feature>
<feature type="strand" evidence="5">
    <location>
        <begin position="2"/>
        <end position="6"/>
    </location>
</feature>
<feature type="helix" evidence="5">
    <location>
        <begin position="10"/>
        <end position="13"/>
    </location>
</feature>
<feature type="helix" evidence="5">
    <location>
        <begin position="14"/>
        <end position="17"/>
    </location>
</feature>
<feature type="helix" evidence="5">
    <location>
        <begin position="20"/>
        <end position="27"/>
    </location>
</feature>
<feature type="strand" evidence="5">
    <location>
        <begin position="32"/>
        <end position="36"/>
    </location>
</feature>
<feature type="helix" evidence="5">
    <location>
        <begin position="38"/>
        <end position="41"/>
    </location>
</feature>
<feature type="helix" evidence="5">
    <location>
        <begin position="64"/>
        <end position="78"/>
    </location>
</feature>
<feature type="strand" evidence="5">
    <location>
        <begin position="83"/>
        <end position="87"/>
    </location>
</feature>
<feature type="strand" evidence="5">
    <location>
        <begin position="91"/>
        <end position="93"/>
    </location>
</feature>
<feature type="helix" evidence="5">
    <location>
        <begin position="96"/>
        <end position="103"/>
    </location>
</feature>
<feature type="strand" evidence="5">
    <location>
        <begin position="106"/>
        <end position="111"/>
    </location>
</feature>
<feature type="helix" evidence="5">
    <location>
        <begin position="120"/>
        <end position="126"/>
    </location>
</feature>
<feature type="strand" evidence="5">
    <location>
        <begin position="128"/>
        <end position="136"/>
    </location>
</feature>
<feature type="helix" evidence="5">
    <location>
        <begin position="142"/>
        <end position="153"/>
    </location>
</feature>
<feature type="turn" evidence="5">
    <location>
        <begin position="157"/>
        <end position="159"/>
    </location>
</feature>
<feature type="strand" evidence="5">
    <location>
        <begin position="185"/>
        <end position="187"/>
    </location>
</feature>
<feature type="helix" evidence="5">
    <location>
        <begin position="194"/>
        <end position="197"/>
    </location>
</feature>
<feature type="helix" evidence="5">
    <location>
        <begin position="201"/>
        <end position="219"/>
    </location>
</feature>
<feature type="helix" evidence="5">
    <location>
        <begin position="221"/>
        <end position="225"/>
    </location>
</feature>
<feature type="helix" evidence="5">
    <location>
        <begin position="231"/>
        <end position="245"/>
    </location>
</feature>
<dbReference type="EC" id="2.1.1.228" evidence="2"/>
<dbReference type="EMBL" id="X01818">
    <property type="protein sequence ID" value="CAA25959.1"/>
    <property type="molecule type" value="Genomic_DNA"/>
</dbReference>
<dbReference type="EMBL" id="U00096">
    <property type="protein sequence ID" value="AAC75656.1"/>
    <property type="molecule type" value="Genomic_DNA"/>
</dbReference>
<dbReference type="EMBL" id="AP009048">
    <property type="protein sequence ID" value="BAA16492.1"/>
    <property type="molecule type" value="Genomic_DNA"/>
</dbReference>
<dbReference type="PIR" id="A30380">
    <property type="entry name" value="XYECG1"/>
</dbReference>
<dbReference type="RefSeq" id="NP_417098.1">
    <property type="nucleotide sequence ID" value="NC_000913.3"/>
</dbReference>
<dbReference type="RefSeq" id="WP_000264777.1">
    <property type="nucleotide sequence ID" value="NZ_STEB01000040.1"/>
</dbReference>
<dbReference type="PDB" id="1P9P">
    <property type="method" value="X-ray"/>
    <property type="resolution" value="2.50 A"/>
    <property type="chains" value="A=1-255"/>
</dbReference>
<dbReference type="PDBsum" id="1P9P"/>
<dbReference type="SMR" id="P0A873"/>
<dbReference type="BioGRID" id="4263072">
    <property type="interactions" value="58"/>
</dbReference>
<dbReference type="BioGRID" id="851435">
    <property type="interactions" value="1"/>
</dbReference>
<dbReference type="DIP" id="DIP-48264N"/>
<dbReference type="FunCoup" id="P0A873">
    <property type="interactions" value="655"/>
</dbReference>
<dbReference type="IntAct" id="P0A873">
    <property type="interactions" value="1"/>
</dbReference>
<dbReference type="STRING" id="511145.b2607"/>
<dbReference type="BindingDB" id="P0A873"/>
<dbReference type="ChEMBL" id="CHEMBL5291575"/>
<dbReference type="jPOST" id="P0A873"/>
<dbReference type="PaxDb" id="511145-b2607"/>
<dbReference type="EnsemblBacteria" id="AAC75656">
    <property type="protein sequence ID" value="AAC75656"/>
    <property type="gene ID" value="b2607"/>
</dbReference>
<dbReference type="GeneID" id="93774457"/>
<dbReference type="GeneID" id="947099"/>
<dbReference type="KEGG" id="ecj:JW2588"/>
<dbReference type="KEGG" id="eco:b2607"/>
<dbReference type="KEGG" id="ecoc:C3026_14435"/>
<dbReference type="PATRIC" id="fig|1411691.4.peg.4132"/>
<dbReference type="EchoBASE" id="EB1016"/>
<dbReference type="eggNOG" id="COG0336">
    <property type="taxonomic scope" value="Bacteria"/>
</dbReference>
<dbReference type="HOGENOM" id="CLU_047363_0_1_6"/>
<dbReference type="InParanoid" id="P0A873"/>
<dbReference type="OMA" id="ILCGHYK"/>
<dbReference type="OrthoDB" id="9807416at2"/>
<dbReference type="PhylomeDB" id="P0A873"/>
<dbReference type="BioCyc" id="EcoCyc:EG11023-MONOMER"/>
<dbReference type="BioCyc" id="MetaCyc:EG11023-MONOMER"/>
<dbReference type="BRENDA" id="2.1.1.228">
    <property type="organism ID" value="2026"/>
</dbReference>
<dbReference type="EvolutionaryTrace" id="P0A873"/>
<dbReference type="PRO" id="PR:P0A873"/>
<dbReference type="Proteomes" id="UP000000625">
    <property type="component" value="Chromosome"/>
</dbReference>
<dbReference type="GO" id="GO:0005829">
    <property type="term" value="C:cytosol"/>
    <property type="evidence" value="ECO:0000314"/>
    <property type="project" value="EcoCyc"/>
</dbReference>
<dbReference type="GO" id="GO:0042802">
    <property type="term" value="F:identical protein binding"/>
    <property type="evidence" value="ECO:0000353"/>
    <property type="project" value="IntAct"/>
</dbReference>
<dbReference type="GO" id="GO:0000287">
    <property type="term" value="F:magnesium ion binding"/>
    <property type="evidence" value="ECO:0000314"/>
    <property type="project" value="EcoCyc"/>
</dbReference>
<dbReference type="GO" id="GO:0042803">
    <property type="term" value="F:protein homodimerization activity"/>
    <property type="evidence" value="ECO:0000314"/>
    <property type="project" value="EcoCyc"/>
</dbReference>
<dbReference type="GO" id="GO:0052906">
    <property type="term" value="F:tRNA (guanine(37)-N1)-methyltransferase activity"/>
    <property type="evidence" value="ECO:0000314"/>
    <property type="project" value="EcoCyc"/>
</dbReference>
<dbReference type="GO" id="GO:0030488">
    <property type="term" value="P:tRNA methylation"/>
    <property type="evidence" value="ECO:0000315"/>
    <property type="project" value="EcoCyc"/>
</dbReference>
<dbReference type="GO" id="GO:0002939">
    <property type="term" value="P:tRNA N1-guanine methylation"/>
    <property type="evidence" value="ECO:0000314"/>
    <property type="project" value="EcoCyc"/>
</dbReference>
<dbReference type="CDD" id="cd18080">
    <property type="entry name" value="TrmD-like"/>
    <property type="match status" value="1"/>
</dbReference>
<dbReference type="DisProt" id="DP02716"/>
<dbReference type="FunFam" id="1.10.1270.20:FF:000001">
    <property type="entry name" value="tRNA (guanine-N(1)-)-methyltransferase"/>
    <property type="match status" value="1"/>
</dbReference>
<dbReference type="FunFam" id="3.40.1280.10:FF:000001">
    <property type="entry name" value="tRNA (guanine-N(1)-)-methyltransferase"/>
    <property type="match status" value="1"/>
</dbReference>
<dbReference type="Gene3D" id="3.40.1280.10">
    <property type="match status" value="1"/>
</dbReference>
<dbReference type="Gene3D" id="1.10.1270.20">
    <property type="entry name" value="tRNA(m1g37)methyltransferase, domain 2"/>
    <property type="match status" value="1"/>
</dbReference>
<dbReference type="HAMAP" id="MF_00605">
    <property type="entry name" value="TrmD"/>
    <property type="match status" value="1"/>
</dbReference>
<dbReference type="InterPro" id="IPR029028">
    <property type="entry name" value="Alpha/beta_knot_MTases"/>
</dbReference>
<dbReference type="InterPro" id="IPR023148">
    <property type="entry name" value="tRNA_m1G_MeTrfase_C_sf"/>
</dbReference>
<dbReference type="InterPro" id="IPR002649">
    <property type="entry name" value="tRNA_m1G_MeTrfase_TrmD"/>
</dbReference>
<dbReference type="InterPro" id="IPR029026">
    <property type="entry name" value="tRNA_m1G_MTases_N"/>
</dbReference>
<dbReference type="InterPro" id="IPR016009">
    <property type="entry name" value="tRNA_MeTrfase_TRMD/TRM10"/>
</dbReference>
<dbReference type="NCBIfam" id="NF000648">
    <property type="entry name" value="PRK00026.1"/>
    <property type="match status" value="1"/>
</dbReference>
<dbReference type="NCBIfam" id="TIGR00088">
    <property type="entry name" value="trmD"/>
    <property type="match status" value="1"/>
</dbReference>
<dbReference type="PANTHER" id="PTHR46417">
    <property type="entry name" value="TRNA (GUANINE-N(1)-)-METHYLTRANSFERASE"/>
    <property type="match status" value="1"/>
</dbReference>
<dbReference type="PANTHER" id="PTHR46417:SF1">
    <property type="entry name" value="TRNA (GUANINE-N(1)-)-METHYLTRANSFERASE"/>
    <property type="match status" value="1"/>
</dbReference>
<dbReference type="Pfam" id="PF01746">
    <property type="entry name" value="tRNA_m1G_MT"/>
    <property type="match status" value="1"/>
</dbReference>
<dbReference type="PIRSF" id="PIRSF000386">
    <property type="entry name" value="tRNA_mtase"/>
    <property type="match status" value="1"/>
</dbReference>
<dbReference type="SUPFAM" id="SSF75217">
    <property type="entry name" value="alpha/beta knot"/>
    <property type="match status" value="1"/>
</dbReference>
<name>TRMD_ECOLI</name>
<evidence type="ECO:0000250" key="1"/>
<evidence type="ECO:0000269" key="2">
    <source>
    </source>
</evidence>
<evidence type="ECO:0000305" key="3"/>
<evidence type="ECO:0000305" key="4">
    <source>
    </source>
</evidence>
<evidence type="ECO:0007829" key="5">
    <source>
        <dbReference type="PDB" id="1P9P"/>
    </source>
</evidence>
<reference key="1">
    <citation type="journal article" date="1983" name="EMBO J.">
        <title>The nucleotide sequence of an Escherichia coli operon containing genes for the tRNA(m1G)methyltransferase, the ribosomal proteins S16 and L19 and a 21-K polypeptide.</title>
        <authorList>
            <person name="Bystroem A.S."/>
            <person name="Hjalmarsson K.J."/>
            <person name="Wikstroem P.M."/>
            <person name="Bjoerk G.R."/>
        </authorList>
    </citation>
    <scope>NUCLEOTIDE SEQUENCE [GENOMIC DNA]</scope>
    <scope>OPERON STRUCTURE</scope>
    <source>
        <strain>K12</strain>
    </source>
</reference>
<reference key="2">
    <citation type="journal article" date="1997" name="DNA Res.">
        <title>Construction of a contiguous 874-kb sequence of the Escherichia coli-K12 genome corresponding to 50.0-68.8 min on the linkage map and analysis of its sequence features.</title>
        <authorList>
            <person name="Yamamoto Y."/>
            <person name="Aiba H."/>
            <person name="Baba T."/>
            <person name="Hayashi K."/>
            <person name="Inada T."/>
            <person name="Isono K."/>
            <person name="Itoh T."/>
            <person name="Kimura S."/>
            <person name="Kitagawa M."/>
            <person name="Makino K."/>
            <person name="Miki T."/>
            <person name="Mitsuhashi N."/>
            <person name="Mizobuchi K."/>
            <person name="Mori H."/>
            <person name="Nakade S."/>
            <person name="Nakamura Y."/>
            <person name="Nashimoto H."/>
            <person name="Oshima T."/>
            <person name="Oyama S."/>
            <person name="Saito N."/>
            <person name="Sampei G."/>
            <person name="Satoh Y."/>
            <person name="Sivasundaram S."/>
            <person name="Tagami H."/>
            <person name="Takahashi H."/>
            <person name="Takeda J."/>
            <person name="Takemoto K."/>
            <person name="Uehara K."/>
            <person name="Wada C."/>
            <person name="Yamagata S."/>
            <person name="Horiuchi T."/>
        </authorList>
    </citation>
    <scope>NUCLEOTIDE SEQUENCE [LARGE SCALE GENOMIC DNA]</scope>
    <source>
        <strain>K12 / W3110 / ATCC 27325 / DSM 5911</strain>
    </source>
</reference>
<reference key="3">
    <citation type="journal article" date="1997" name="Science">
        <title>The complete genome sequence of Escherichia coli K-12.</title>
        <authorList>
            <person name="Blattner F.R."/>
            <person name="Plunkett G. III"/>
            <person name="Bloch C.A."/>
            <person name="Perna N.T."/>
            <person name="Burland V."/>
            <person name="Riley M."/>
            <person name="Collado-Vides J."/>
            <person name="Glasner J.D."/>
            <person name="Rode C.K."/>
            <person name="Mayhew G.F."/>
            <person name="Gregor J."/>
            <person name="Davis N.W."/>
            <person name="Kirkpatrick H.A."/>
            <person name="Goeden M.A."/>
            <person name="Rose D.J."/>
            <person name="Mau B."/>
            <person name="Shao Y."/>
        </authorList>
    </citation>
    <scope>NUCLEOTIDE SEQUENCE [LARGE SCALE GENOMIC DNA]</scope>
    <source>
        <strain>K12 / MG1655 / ATCC 47076</strain>
    </source>
</reference>
<reference key="4">
    <citation type="journal article" date="2006" name="Mol. Syst. Biol.">
        <title>Highly accurate genome sequences of Escherichia coli K-12 strains MG1655 and W3110.</title>
        <authorList>
            <person name="Hayashi K."/>
            <person name="Morooka N."/>
            <person name="Yamamoto Y."/>
            <person name="Fujita K."/>
            <person name="Isono K."/>
            <person name="Choi S."/>
            <person name="Ohtsubo E."/>
            <person name="Baba T."/>
            <person name="Wanner B.L."/>
            <person name="Mori H."/>
            <person name="Horiuchi T."/>
        </authorList>
    </citation>
    <scope>NUCLEOTIDE SEQUENCE [LARGE SCALE GENOMIC DNA]</scope>
    <source>
        <strain>K12 / W3110 / ATCC 27325 / DSM 5911</strain>
    </source>
</reference>
<reference key="5">
    <citation type="journal article" date="1983" name="J. Biol. Chem.">
        <title>Purification and characterization of transfer RNA (guanine-1)methyltransferase from Escherichia coli.</title>
        <authorList>
            <person name="Hjalmarsson K.J."/>
            <person name="Bystroem A.S."/>
            <person name="Bjoerk G.R."/>
        </authorList>
    </citation>
    <scope>CHARACTERIZATION</scope>
    <scope>PROTEIN SEQUENCE OF 1-10</scope>
</reference>
<reference key="6">
    <citation type="journal article" date="2003" name="J. Mol. Biol.">
        <title>Insights into catalysis by a knotted TrmD tRNA methyltransferase.</title>
        <authorList>
            <person name="Elkins P.A."/>
            <person name="Watts J.M."/>
            <person name="Zalacain M."/>
            <person name="van Thiel A."/>
            <person name="Vitazka P.R."/>
            <person name="Redlak M."/>
            <person name="Andraos-Selim C."/>
            <person name="Rastinejad F."/>
            <person name="Holmes W.M."/>
        </authorList>
    </citation>
    <scope>X-RAY CRYSTALLOGRAPHY (2.5 ANGSTROMS) IN COMPLEX WITH SUBSTRATE</scope>
    <scope>FUNCTION</scope>
    <scope>SUBUNIT</scope>
    <scope>MUTAGENESIS OF GLY-59; GLY-91; ARG-114; TYR-115; GLY-117; ASP-119; ARG-121; ASP-128; ASP-135; TYR-136; GLY-141; ARG-154; ASP-169; PHE-171; PRO-184; VAL-192; PRO-193; LEU-196; LEU-197; ILE-204; TRP-207 AND ARG-208</scope>
    <scope>ACTIVE SITE</scope>
    <scope>CATALYTIC ACTIVITY</scope>
</reference>
<sequence length="255" mass="28422">MWIGIISLFPEMFRAITDYGVTGRAVKNGLLSIQSWSPRDFTHDRHRTVDDRPYGGGPGMLMMVQPLRDAIHAAKAAAGEGAKVIYLSPQGRKLDQAGVSELATNQKLILVCGRYEGIDERVIQTEIDEEWSIGDYVLSGGELPAMTLIDSVSRFIPGVLGHEASATEDSFAEGLLDCPHYTRPEVLEGMEVPPVLLSGNHAEIRRWRLKQSLGRTWLRRPELLENLALTEEQARLLAEFKTEHAQQQHKHDGMA</sequence>
<gene>
    <name type="primary">trmD</name>
    <name type="ordered locus">b2607</name>
    <name type="ordered locus">JW2588</name>
</gene>
<proteinExistence type="evidence at protein level"/>
<keyword id="KW-0002">3D-structure</keyword>
<keyword id="KW-0963">Cytoplasm</keyword>
<keyword id="KW-0903">Direct protein sequencing</keyword>
<keyword id="KW-0489">Methyltransferase</keyword>
<keyword id="KW-1185">Reference proteome</keyword>
<keyword id="KW-0949">S-adenosyl-L-methionine</keyword>
<keyword id="KW-0808">Transferase</keyword>
<keyword id="KW-0819">tRNA processing</keyword>
<organism>
    <name type="scientific">Escherichia coli (strain K12)</name>
    <dbReference type="NCBI Taxonomy" id="83333"/>
    <lineage>
        <taxon>Bacteria</taxon>
        <taxon>Pseudomonadati</taxon>
        <taxon>Pseudomonadota</taxon>
        <taxon>Gammaproteobacteria</taxon>
        <taxon>Enterobacterales</taxon>
        <taxon>Enterobacteriaceae</taxon>
        <taxon>Escherichia</taxon>
    </lineage>
</organism>